<proteinExistence type="evidence at protein level"/>
<gene>
    <name type="primary">prt</name>
    <name type="ordered locus">VPA0459</name>
</gene>
<protein>
    <recommendedName>
        <fullName>Microbial collagenase</fullName>
        <ecNumber>3.4.24.3</ecNumber>
    </recommendedName>
    <alternativeName>
        <fullName>prtVp</fullName>
    </alternativeName>
</protein>
<evidence type="ECO:0000250" key="1"/>
<evidence type="ECO:0000255" key="2"/>
<evidence type="ECO:0000255" key="3">
    <source>
        <dbReference type="PROSITE-ProRule" id="PRU10095"/>
    </source>
</evidence>
<evidence type="ECO:0000305" key="4"/>
<organism>
    <name type="scientific">Vibrio parahaemolyticus serotype O3:K6 (strain RIMD 2210633)</name>
    <dbReference type="NCBI Taxonomy" id="223926"/>
    <lineage>
        <taxon>Bacteria</taxon>
        <taxon>Pseudomonadati</taxon>
        <taxon>Pseudomonadota</taxon>
        <taxon>Gammaproteobacteria</taxon>
        <taxon>Vibrionales</taxon>
        <taxon>Vibrionaceae</taxon>
        <taxon>Vibrio</taxon>
    </lineage>
</organism>
<comment type="function">
    <text>Possesses gelatinolytic activity. Can cause weak haemolysis on blood agar.</text>
</comment>
<comment type="catalytic activity">
    <reaction>
        <text>Digestion of native collagen in the triple helical region at Xaa-|-Gly bonds. With synthetic peptides, a preference is shown for Gly at P3 and P1', Pro and Ala at P2 and P2', and hydroxyproline, Ala or Arg at P3'.</text>
        <dbReference type="EC" id="3.4.24.3"/>
    </reaction>
</comment>
<comment type="cofactor">
    <cofactor evidence="1">
        <name>Zn(2+)</name>
        <dbReference type="ChEBI" id="CHEBI:29105"/>
    </cofactor>
    <text evidence="1">Binds 1 zinc ion.</text>
</comment>
<comment type="subcellular location">
    <subcellularLocation>
        <location>Secreted</location>
    </subcellularLocation>
</comment>
<comment type="similarity">
    <text evidence="4">Belongs to the peptidase M9A family.</text>
</comment>
<comment type="sequence caution" evidence="4">
    <conflict type="frameshift">
        <sequence resource="EMBL-CDS" id="CAA86734"/>
    </conflict>
</comment>
<feature type="signal peptide" evidence="2">
    <location>
        <begin position="1"/>
        <end position="27"/>
    </location>
</feature>
<feature type="chain" id="PRO_0000028679" description="Microbial collagenase">
    <location>
        <begin position="28"/>
        <end position="816"/>
    </location>
</feature>
<feature type="active site" evidence="3">
    <location>
        <position position="436"/>
    </location>
</feature>
<feature type="binding site" evidence="3">
    <location>
        <position position="435"/>
    </location>
    <ligand>
        <name>Zn(2+)</name>
        <dbReference type="ChEBI" id="CHEBI:29105"/>
        <note>catalytic</note>
    </ligand>
</feature>
<feature type="binding site" evidence="3">
    <location>
        <position position="439"/>
    </location>
    <ligand>
        <name>Zn(2+)</name>
        <dbReference type="ChEBI" id="CHEBI:29105"/>
        <note>catalytic</note>
    </ligand>
</feature>
<feature type="sequence conflict" description="In Ref. 2; CAA86734." evidence="4" ref="2">
    <original>M</original>
    <variation>I</variation>
    <location>
        <position position="175"/>
    </location>
</feature>
<feature type="sequence conflict" description="In Ref. 2; CAA86734." evidence="4" ref="2">
    <original>KQ</original>
    <variation>NE</variation>
    <location>
        <begin position="311"/>
        <end position="312"/>
    </location>
</feature>
<feature type="sequence conflict" description="In Ref. 2; CAA86734." evidence="4" ref="2">
    <original>T</original>
    <variation>S</variation>
    <location>
        <position position="337"/>
    </location>
</feature>
<feature type="sequence conflict" description="In Ref. 2; CAA86734." evidence="4" ref="2">
    <original>QQ</original>
    <variation>HE</variation>
    <location>
        <begin position="542"/>
        <end position="543"/>
    </location>
</feature>
<feature type="sequence conflict" description="In Ref. 2." evidence="4" ref="2">
    <original>E</original>
    <variation>R</variation>
    <location>
        <position position="580"/>
    </location>
</feature>
<accession>Q56696</accession>
<name>COLA_VIBPA</name>
<dbReference type="EC" id="3.4.24.3"/>
<dbReference type="EMBL" id="BA000032">
    <property type="protein sequence ID" value="BAC61802.1"/>
    <property type="molecule type" value="Genomic_DNA"/>
</dbReference>
<dbReference type="EMBL" id="Z46782">
    <property type="protein sequence ID" value="CAA86734.1"/>
    <property type="status" value="ALT_FRAME"/>
    <property type="molecule type" value="Genomic_DNA"/>
</dbReference>
<dbReference type="RefSeq" id="NP_799969.1">
    <property type="nucleotide sequence ID" value="NC_004605.1"/>
</dbReference>
<dbReference type="RefSeq" id="WP_005479219.1">
    <property type="nucleotide sequence ID" value="NC_004605.1"/>
</dbReference>
<dbReference type="SMR" id="Q56696"/>
<dbReference type="MEROPS" id="M09.004"/>
<dbReference type="GeneID" id="1191147"/>
<dbReference type="KEGG" id="vpa:VPA0459"/>
<dbReference type="PATRIC" id="fig|223926.6.peg.3400"/>
<dbReference type="eggNOG" id="COG4934">
    <property type="taxonomic scope" value="Bacteria"/>
</dbReference>
<dbReference type="HOGENOM" id="CLU_011878_0_0_6"/>
<dbReference type="BRENDA" id="3.4.24.3">
    <property type="organism ID" value="15981"/>
</dbReference>
<dbReference type="Proteomes" id="UP000002493">
    <property type="component" value="Chromosome 2"/>
</dbReference>
<dbReference type="GO" id="GO:0005576">
    <property type="term" value="C:extracellular region"/>
    <property type="evidence" value="ECO:0007669"/>
    <property type="project" value="UniProtKB-SubCell"/>
</dbReference>
<dbReference type="GO" id="GO:0004222">
    <property type="term" value="F:metalloendopeptidase activity"/>
    <property type="evidence" value="ECO:0007669"/>
    <property type="project" value="UniProtKB-EC"/>
</dbReference>
<dbReference type="GO" id="GO:0008270">
    <property type="term" value="F:zinc ion binding"/>
    <property type="evidence" value="ECO:0007669"/>
    <property type="project" value="InterPro"/>
</dbReference>
<dbReference type="GO" id="GO:0030574">
    <property type="term" value="P:collagen catabolic process"/>
    <property type="evidence" value="ECO:0007669"/>
    <property type="project" value="UniProtKB-KW"/>
</dbReference>
<dbReference type="GO" id="GO:0006508">
    <property type="term" value="P:proteolysis"/>
    <property type="evidence" value="ECO:0007669"/>
    <property type="project" value="UniProtKB-KW"/>
</dbReference>
<dbReference type="Gene3D" id="1.10.390.20">
    <property type="match status" value="1"/>
</dbReference>
<dbReference type="Gene3D" id="2.60.120.380">
    <property type="match status" value="2"/>
</dbReference>
<dbReference type="Gene3D" id="3.40.30.160">
    <property type="entry name" value="Collagenase ColT, N-terminal domain"/>
    <property type="match status" value="1"/>
</dbReference>
<dbReference type="InterPro" id="IPR007280">
    <property type="entry name" value="Peptidase_C_arc/bac"/>
</dbReference>
<dbReference type="InterPro" id="IPR013661">
    <property type="entry name" value="Peptidase_M9_N_dom"/>
</dbReference>
<dbReference type="InterPro" id="IPR002169">
    <property type="entry name" value="Peptidase_M9A/M9B"/>
</dbReference>
<dbReference type="PANTHER" id="PTHR13062">
    <property type="entry name" value="COLLAGENASE"/>
    <property type="match status" value="1"/>
</dbReference>
<dbReference type="PANTHER" id="PTHR13062:SF9">
    <property type="entry name" value="MICROBIAL COLLAGENASE"/>
    <property type="match status" value="1"/>
</dbReference>
<dbReference type="Pfam" id="PF01752">
    <property type="entry name" value="Peptidase_M9"/>
    <property type="match status" value="1"/>
</dbReference>
<dbReference type="Pfam" id="PF08453">
    <property type="entry name" value="Peptidase_M9_N"/>
    <property type="match status" value="1"/>
</dbReference>
<dbReference type="Pfam" id="PF04151">
    <property type="entry name" value="PPC"/>
    <property type="match status" value="2"/>
</dbReference>
<dbReference type="PRINTS" id="PR00931">
    <property type="entry name" value="MICOLLPTASE"/>
</dbReference>
<dbReference type="PROSITE" id="PS00142">
    <property type="entry name" value="ZINC_PROTEASE"/>
    <property type="match status" value="1"/>
</dbReference>
<sequence length="816" mass="91444">MSHIRFFPRHRLALACMLASVSSFSFAQNQCAVADLQQSRDLAAAVSGAEYDCYHAWFSAPSATLNDIYSEASLSRIQVALDQEIARYRGEAEQARVLENLGEFVRAAYYVRYNAGTGTPEFSEALSQRFAQSTNLFLNNPHALDQGREQVGAMKSLTLMVDNVKQLPLTMDSMMAALMHFNRDTAKDTQWVDGLNNLFRSMAGHAANDAFYRYMANNTHHIDTLARFASDNAWALDTDANFIVFNALRETGRLLASPDQETKRKALAVMQQVMQRYPLGSEHDKLWLAAVEMMSYYAPEGLNGLNLEQAKQDLAARVMPNRFECQGPAIIRSEDLTDAQAAKACEVLAAKEADFHQVANTGNQPVADDLNDRVEVAVFASNDSYVDYSSFLFGNTTDNGGQYLEGTPSRADNTARFVAYRYANGEDLSILNLEHEYTHYLDARFNQYGSFSDNLAHGHIVWWLEGFAEYMHYKQGYKAAIDLIPSGKLSLSTVFDTTYSHDSNRIYRWGYLAVRFMLENHPQDVESLLALSRSGQFAQWAQQVTVLGQQYDAEFERWLDTLEVVVEPEQPGTDPEEPSEPTDPEVQVTELAANQSLQLSGEAYSEKLFYVDVPANTVRFNVSIEGAGDADLYMSYNKVAHYYDFEMSQYADGSNEEIQFAPEQNGYVKAGRYYISLTGRDSYDSVNLVAALEVEAQTPPTQVQDDLAPVVLESGEAKVLTVHQQRYAAVYVPEGVKEVRVWMSSQSNANDPYGAGNVDLYASRKHWPTAEQHEYASNYAGSNEYLAIPVTEAGYVHFSLQAPQQGDDVEMLVYFF</sequence>
<keyword id="KW-0177">Collagen degradation</keyword>
<keyword id="KW-0378">Hydrolase</keyword>
<keyword id="KW-0479">Metal-binding</keyword>
<keyword id="KW-0482">Metalloprotease</keyword>
<keyword id="KW-0645">Protease</keyword>
<keyword id="KW-0964">Secreted</keyword>
<keyword id="KW-0732">Signal</keyword>
<keyword id="KW-0862">Zinc</keyword>
<keyword id="KW-0865">Zymogen</keyword>
<reference key="1">
    <citation type="journal article" date="2003" name="Lancet">
        <title>Genome sequence of Vibrio parahaemolyticus: a pathogenic mechanism distinct from that of V. cholerae.</title>
        <authorList>
            <person name="Makino K."/>
            <person name="Oshima K."/>
            <person name="Kurokawa K."/>
            <person name="Yokoyama K."/>
            <person name="Uda T."/>
            <person name="Tagomori K."/>
            <person name="Iijima Y."/>
            <person name="Najima M."/>
            <person name="Nakano M."/>
            <person name="Yamashita A."/>
            <person name="Kubota Y."/>
            <person name="Kimura S."/>
            <person name="Yasunaga T."/>
            <person name="Honda T."/>
            <person name="Shinagawa H."/>
            <person name="Hattori M."/>
            <person name="Iida T."/>
        </authorList>
    </citation>
    <scope>NUCLEOTIDE SEQUENCE [LARGE SCALE GENOMIC DNA]</scope>
    <source>
        <strain>RIMD 2210633</strain>
    </source>
</reference>
<reference key="2">
    <citation type="journal article" date="1995" name="Microbiology">
        <title>Molecular analysis of an extracellular protease gene from Vibrio parahaemolyticus.</title>
        <authorList>
            <person name="Lee C."/>
            <person name="Su S."/>
            <person name="Liaw R."/>
        </authorList>
    </citation>
    <scope>NUCLEOTIDE SEQUENCE [GENOMIC DNA] OF 1-601</scope>
    <scope>CHARACTERIZATION</scope>
    <source>
        <strain>93</strain>
    </source>
</reference>